<comment type="similarity">
    <text evidence="1">To M.jannaschii MJECL20.</text>
</comment>
<gene>
    <name type="ordered locus">MJ0215</name>
</gene>
<organism>
    <name type="scientific">Methanocaldococcus jannaschii (strain ATCC 43067 / DSM 2661 / JAL-1 / JCM 10045 / NBRC 100440)</name>
    <name type="common">Methanococcus jannaschii</name>
    <dbReference type="NCBI Taxonomy" id="243232"/>
    <lineage>
        <taxon>Archaea</taxon>
        <taxon>Methanobacteriati</taxon>
        <taxon>Methanobacteriota</taxon>
        <taxon>Methanomada group</taxon>
        <taxon>Methanococci</taxon>
        <taxon>Methanococcales</taxon>
        <taxon>Methanocaldococcaceae</taxon>
        <taxon>Methanocaldococcus</taxon>
    </lineage>
</organism>
<proteinExistence type="predicted"/>
<accession>Q57668</accession>
<reference key="1">
    <citation type="journal article" date="1996" name="Science">
        <title>Complete genome sequence of the methanogenic archaeon, Methanococcus jannaschii.</title>
        <authorList>
            <person name="Bult C.J."/>
            <person name="White O."/>
            <person name="Olsen G.J."/>
            <person name="Zhou L."/>
            <person name="Fleischmann R.D."/>
            <person name="Sutton G.G."/>
            <person name="Blake J.A."/>
            <person name="FitzGerald L.M."/>
            <person name="Clayton R.A."/>
            <person name="Gocayne J.D."/>
            <person name="Kerlavage A.R."/>
            <person name="Dougherty B.A."/>
            <person name="Tomb J.-F."/>
            <person name="Adams M.D."/>
            <person name="Reich C.I."/>
            <person name="Overbeek R."/>
            <person name="Kirkness E.F."/>
            <person name="Weinstock K.G."/>
            <person name="Merrick J.M."/>
            <person name="Glodek A."/>
            <person name="Scott J.L."/>
            <person name="Geoghagen N.S.M."/>
            <person name="Weidman J.F."/>
            <person name="Fuhrmann J.L."/>
            <person name="Nguyen D."/>
            <person name="Utterback T.R."/>
            <person name="Kelley J.M."/>
            <person name="Peterson J.D."/>
            <person name="Sadow P.W."/>
            <person name="Hanna M.C."/>
            <person name="Cotton M.D."/>
            <person name="Roberts K.M."/>
            <person name="Hurst M.A."/>
            <person name="Kaine B.P."/>
            <person name="Borodovsky M."/>
            <person name="Klenk H.-P."/>
            <person name="Fraser C.M."/>
            <person name="Smith H.O."/>
            <person name="Woese C.R."/>
            <person name="Venter J.C."/>
        </authorList>
    </citation>
    <scope>NUCLEOTIDE SEQUENCE [LARGE SCALE GENOMIC DNA]</scope>
    <source>
        <strain>ATCC 43067 / DSM 2661 / JAL-1 / JCM 10045 / NBRC 100440</strain>
    </source>
</reference>
<keyword id="KW-1185">Reference proteome</keyword>
<name>Y215_METJA</name>
<dbReference type="EMBL" id="L77117">
    <property type="protein sequence ID" value="AAB98205.1"/>
    <property type="molecule type" value="Genomic_DNA"/>
</dbReference>
<dbReference type="PIR" id="H64326">
    <property type="entry name" value="H64326"/>
</dbReference>
<dbReference type="SMR" id="Q57668"/>
<dbReference type="STRING" id="243232.MJ_0215"/>
<dbReference type="PaxDb" id="243232-MJ_0215"/>
<dbReference type="EnsemblBacteria" id="AAB98205">
    <property type="protein sequence ID" value="AAB98205"/>
    <property type="gene ID" value="MJ_0215"/>
</dbReference>
<dbReference type="KEGG" id="mja:MJ_0215"/>
<dbReference type="eggNOG" id="arCOG03413">
    <property type="taxonomic scope" value="Archaea"/>
</dbReference>
<dbReference type="HOGENOM" id="CLU_1700308_0_0_2"/>
<dbReference type="InParanoid" id="Q57668"/>
<dbReference type="PhylomeDB" id="Q57668"/>
<dbReference type="Proteomes" id="UP000000805">
    <property type="component" value="Chromosome"/>
</dbReference>
<dbReference type="GO" id="GO:0005737">
    <property type="term" value="C:cytoplasm"/>
    <property type="evidence" value="ECO:0000318"/>
    <property type="project" value="GO_Central"/>
</dbReference>
<dbReference type="GO" id="GO:0004725">
    <property type="term" value="F:protein tyrosine phosphatase activity"/>
    <property type="evidence" value="ECO:0000318"/>
    <property type="project" value="GO_Central"/>
</dbReference>
<dbReference type="FunFam" id="3.90.190.10:FF:000274">
    <property type="entry name" value="Uncharacterized protein MJ0215"/>
    <property type="match status" value="1"/>
</dbReference>
<dbReference type="Gene3D" id="3.90.190.10">
    <property type="entry name" value="Protein tyrosine phosphatase superfamily"/>
    <property type="match status" value="1"/>
</dbReference>
<dbReference type="InterPro" id="IPR029021">
    <property type="entry name" value="Prot-tyrosine_phosphatase-like"/>
</dbReference>
<dbReference type="InterPro" id="IPR050561">
    <property type="entry name" value="PTP"/>
</dbReference>
<dbReference type="InterPro" id="IPR000387">
    <property type="entry name" value="Tyr_Pase_dom"/>
</dbReference>
<dbReference type="PANTHER" id="PTHR23339">
    <property type="entry name" value="TYROSINE SPECIFIC PROTEIN PHOSPHATASE AND DUAL SPECIFICITY PROTEIN PHOSPHATASE"/>
    <property type="match status" value="1"/>
</dbReference>
<dbReference type="Pfam" id="PF22785">
    <property type="entry name" value="Tc-R-P"/>
    <property type="match status" value="1"/>
</dbReference>
<dbReference type="SUPFAM" id="SSF52799">
    <property type="entry name" value="(Phosphotyrosine protein) phosphatases II"/>
    <property type="match status" value="1"/>
</dbReference>
<sequence>MYIAILKCESMGRCKHNGEVSIFGVRPASFPNFPFHLMDKIGGFVILDELWLRRWCEIIEYPMRIPTLYVPIEDYGIPTVEDMDLIVDFIKYHVSKEKEVVVSCIGGHGRTGTVLAVWAGLNGIKNPIEYVRERYCECAVETEEQEEFVIEYLKMKKRG</sequence>
<evidence type="ECO:0000305" key="1"/>
<protein>
    <recommendedName>
        <fullName>Uncharacterized protein MJ0215</fullName>
    </recommendedName>
</protein>
<feature type="chain" id="PRO_0000106745" description="Uncharacterized protein MJ0215">
    <location>
        <begin position="1"/>
        <end position="159"/>
    </location>
</feature>